<name>LHRC_METTH</name>
<evidence type="ECO:0000250" key="1">
    <source>
        <dbReference type="UniProtKB" id="A0QT91"/>
    </source>
</evidence>
<evidence type="ECO:0000250" key="2">
    <source>
        <dbReference type="UniProtKB" id="F0LJX3"/>
    </source>
</evidence>
<evidence type="ECO:0000255" key="3">
    <source>
        <dbReference type="PROSITE-ProRule" id="PRU00541"/>
    </source>
</evidence>
<evidence type="ECO:0000255" key="4">
    <source>
        <dbReference type="PROSITE-ProRule" id="PRU00542"/>
    </source>
</evidence>
<evidence type="ECO:0000269" key="5">
    <source>
    </source>
</evidence>
<evidence type="ECO:0000303" key="6">
    <source>
    </source>
</evidence>
<evidence type="ECO:0000305" key="7"/>
<evidence type="ECO:0000305" key="8">
    <source>
    </source>
</evidence>
<organism>
    <name type="scientific">Methanothermobacter thermautotrophicus (strain ATCC 29096 / DSM 1053 / JCM 10044 / NBRC 100330 / Delta H)</name>
    <name type="common">Methanobacterium thermoautotrophicum</name>
    <dbReference type="NCBI Taxonomy" id="187420"/>
    <lineage>
        <taxon>Archaea</taxon>
        <taxon>Methanobacteriati</taxon>
        <taxon>Methanobacteriota</taxon>
        <taxon>Methanomada group</taxon>
        <taxon>Methanobacteria</taxon>
        <taxon>Methanobacteriales</taxon>
        <taxon>Methanobacteriaceae</taxon>
        <taxon>Methanothermobacter</taxon>
    </lineage>
</organism>
<feature type="chain" id="PRO_0000102197" description="ATP-dependent helicase Lhr-Core">
    <location>
        <begin position="1"/>
        <end position="862"/>
    </location>
</feature>
<feature type="domain" description="Helicase ATP-binding" evidence="3">
    <location>
        <begin position="41"/>
        <end position="233"/>
    </location>
</feature>
<feature type="domain" description="Helicase C-terminal" evidence="4">
    <location>
        <begin position="269"/>
        <end position="424"/>
    </location>
</feature>
<feature type="region of interest" description="WH domain" evidence="1">
    <location>
        <begin position="425"/>
        <end position="513"/>
    </location>
</feature>
<feature type="region of interest" description="Domain 4" evidence="1">
    <location>
        <begin position="514"/>
        <end position="862"/>
    </location>
</feature>
<feature type="short sequence motif" description="DEAH box" evidence="3">
    <location>
        <begin position="178"/>
        <end position="181"/>
    </location>
</feature>
<feature type="binding site" evidence="1">
    <location>
        <position position="37"/>
    </location>
    <ligand>
        <name>ATP</name>
        <dbReference type="ChEBI" id="CHEBI:30616"/>
    </ligand>
</feature>
<feature type="binding site" evidence="1">
    <location>
        <position position="60"/>
    </location>
    <ligand>
        <name>ATP</name>
        <dbReference type="ChEBI" id="CHEBI:30616"/>
    </ligand>
</feature>
<feature type="binding site" evidence="1">
    <location>
        <position position="61"/>
    </location>
    <ligand>
        <name>ATP</name>
        <dbReference type="ChEBI" id="CHEBI:30616"/>
    </ligand>
</feature>
<feature type="binding site" evidence="1">
    <location>
        <position position="178"/>
    </location>
    <ligand>
        <name>ATP</name>
        <dbReference type="ChEBI" id="CHEBI:30616"/>
    </ligand>
</feature>
<feature type="binding site" evidence="1">
    <location>
        <position position="179"/>
    </location>
    <ligand>
        <name>ATP</name>
        <dbReference type="ChEBI" id="CHEBI:30616"/>
    </ligand>
</feature>
<feature type="binding site" evidence="1">
    <location>
        <position position="360"/>
    </location>
    <ligand>
        <name>ATP</name>
        <dbReference type="ChEBI" id="CHEBI:30616"/>
    </ligand>
</feature>
<feature type="binding site" evidence="1">
    <location>
        <position position="377"/>
    </location>
    <ligand>
        <name>ATP</name>
        <dbReference type="ChEBI" id="CHEBI:30616"/>
    </ligand>
</feature>
<feature type="binding site" evidence="1">
    <location>
        <position position="380"/>
    </location>
    <ligand>
        <name>ATP</name>
        <dbReference type="ChEBI" id="CHEBI:30616"/>
    </ligand>
</feature>
<feature type="site" description="Wedges between bases of the loading strand" evidence="1">
    <location>
        <position position="512"/>
    </location>
</feature>
<proteinExistence type="evidence at protein level"/>
<keyword id="KW-0067">ATP-binding</keyword>
<keyword id="KW-0227">DNA damage</keyword>
<keyword id="KW-0234">DNA repair</keyword>
<keyword id="KW-0238">DNA-binding</keyword>
<keyword id="KW-0347">Helicase</keyword>
<keyword id="KW-0378">Hydrolase</keyword>
<keyword id="KW-0413">Isomerase</keyword>
<keyword id="KW-0547">Nucleotide-binding</keyword>
<keyword id="KW-1185">Reference proteome</keyword>
<sequence>MIKKQERMYTSGEIHSILHPWVSEWFRRTFDDFTEAQRYAIMDIHRGRNVLVSSPTGSGKTLTAFLSIISELTRLADDGELEDSVYCIYISPLKALDNDIERNLEEPLSAIRDIAAGEGRDLEIRKAVRTGDTTSYERSRMLKKPPHILITTPETLSILLVAPKFREKLSTVRYVIVDEIHSLADNKRGVHLSLSLERLQHLVGDFTRIGLSATVHPLERVARFLVGYSYGSERECLIVDVSYLKELDIDLICPVDDIVAADPEEIGNALYDILHDLIEDHRTTLIFTNTRSGTESVVYNLKSRFPESYSDSNIMAHHSSLSREIRLETEEKLKRGELKAVVSSTSLELGIDIGYIDLVVLLSSPKSVSRALQRIGRSGHQLHQRSKGRIVVVDRDDLVECSLILKNALEGKIDSIKVPENCLDVLAQHIYGMAIENPWDIDHALAVIRNSYCYRNLSREDYLSVLSYLAGEYVELEERYVYAKIWVDYDKNQFGKRGKLARMLYSTNIGTIPDRSAAVVKCGGKVVGRIEEDFMEKLRKGDTFVLGGRIYRFNYARGMTVNVTPASGPPTIPSWFSEQLPLSFDLALDIQRFRDIMDGKFQYGRSRDEIMEFIMSYLHVDERAASSIYEYFREQYLYAGIPSIRRMLVEYYTGFGGRKFIVFHSLFGRRVNDAISRAVAYVIARRYRRDVMISVSDNGFYLSSEGKMGGLEAFRELEPENLRNVLKKALDRTETLASRFRHCAGRALMILRRYRGEEKSVGRQQVRGKILLKFVSELDDKFPILEEARREVMEDYMDIENAIRVLEWIRDGDMEIKQINTRIPSPFAFNLVAQGYLDVLKYEDRIEFIRRMHQAIIDEIKR</sequence>
<accession>O27830</accession>
<dbReference type="EC" id="5.6.2.-" evidence="5"/>
<dbReference type="EC" id="5.6.2.4" evidence="5"/>
<dbReference type="EMBL" id="AE000666">
    <property type="protein sequence ID" value="AAB86268.1"/>
    <property type="molecule type" value="Genomic_DNA"/>
</dbReference>
<dbReference type="PIR" id="H69107">
    <property type="entry name" value="H69107"/>
</dbReference>
<dbReference type="RefSeq" id="WP_010877404.1">
    <property type="nucleotide sequence ID" value="NC_000916.1"/>
</dbReference>
<dbReference type="SMR" id="O27830"/>
<dbReference type="FunCoup" id="O27830">
    <property type="interactions" value="80"/>
</dbReference>
<dbReference type="STRING" id="187420.MTH_1802"/>
<dbReference type="PaxDb" id="187420-MTH_1802"/>
<dbReference type="EnsemblBacteria" id="AAB86268">
    <property type="protein sequence ID" value="AAB86268"/>
    <property type="gene ID" value="MTH_1802"/>
</dbReference>
<dbReference type="GeneID" id="1470887"/>
<dbReference type="KEGG" id="mth:MTH_1802"/>
<dbReference type="PATRIC" id="fig|187420.15.peg.1756"/>
<dbReference type="HOGENOM" id="CLU_002025_0_0_2"/>
<dbReference type="InParanoid" id="O27830"/>
<dbReference type="Proteomes" id="UP000005223">
    <property type="component" value="Chromosome"/>
</dbReference>
<dbReference type="GO" id="GO:0005524">
    <property type="term" value="F:ATP binding"/>
    <property type="evidence" value="ECO:0007669"/>
    <property type="project" value="UniProtKB-KW"/>
</dbReference>
<dbReference type="GO" id="GO:0016887">
    <property type="term" value="F:ATP hydrolysis activity"/>
    <property type="evidence" value="ECO:0007669"/>
    <property type="project" value="InterPro"/>
</dbReference>
<dbReference type="GO" id="GO:0140097">
    <property type="term" value="F:catalytic activity, acting on DNA"/>
    <property type="evidence" value="ECO:0007669"/>
    <property type="project" value="UniProtKB-ARBA"/>
</dbReference>
<dbReference type="GO" id="GO:0003677">
    <property type="term" value="F:DNA binding"/>
    <property type="evidence" value="ECO:0007669"/>
    <property type="project" value="TreeGrafter"/>
</dbReference>
<dbReference type="GO" id="GO:0004386">
    <property type="term" value="F:helicase activity"/>
    <property type="evidence" value="ECO:0007669"/>
    <property type="project" value="UniProtKB-KW"/>
</dbReference>
<dbReference type="CDD" id="cd17922">
    <property type="entry name" value="DEXHc_LHR-like"/>
    <property type="match status" value="1"/>
</dbReference>
<dbReference type="CDD" id="cd18796">
    <property type="entry name" value="SF2_C_LHR"/>
    <property type="match status" value="1"/>
</dbReference>
<dbReference type="Gene3D" id="3.40.50.300">
    <property type="entry name" value="P-loop containing nucleotide triphosphate hydrolases"/>
    <property type="match status" value="2"/>
</dbReference>
<dbReference type="InterPro" id="IPR003593">
    <property type="entry name" value="AAA+_ATPase"/>
</dbReference>
<dbReference type="InterPro" id="IPR052511">
    <property type="entry name" value="ATP-dep_Helicase"/>
</dbReference>
<dbReference type="InterPro" id="IPR013701">
    <property type="entry name" value="DEAD/DEAH_assoc"/>
</dbReference>
<dbReference type="InterPro" id="IPR011545">
    <property type="entry name" value="DEAD/DEAH_box_helicase_dom"/>
</dbReference>
<dbReference type="InterPro" id="IPR014001">
    <property type="entry name" value="Helicase_ATP-bd"/>
</dbReference>
<dbReference type="InterPro" id="IPR001650">
    <property type="entry name" value="Helicase_C-like"/>
</dbReference>
<dbReference type="InterPro" id="IPR017170">
    <property type="entry name" value="Lhr-like_ATP-dep_RNA_helic_prd"/>
</dbReference>
<dbReference type="InterPro" id="IPR045628">
    <property type="entry name" value="Lhr_WH_dom"/>
</dbReference>
<dbReference type="InterPro" id="IPR027417">
    <property type="entry name" value="P-loop_NTPase"/>
</dbReference>
<dbReference type="NCBIfam" id="NF010338">
    <property type="entry name" value="PRK13767.1"/>
    <property type="match status" value="1"/>
</dbReference>
<dbReference type="PANTHER" id="PTHR47962">
    <property type="entry name" value="ATP-DEPENDENT HELICASE LHR-RELATED-RELATED"/>
    <property type="match status" value="1"/>
</dbReference>
<dbReference type="PANTHER" id="PTHR47962:SF6">
    <property type="entry name" value="LARGE HELICASE-RELATED PROTEIN"/>
    <property type="match status" value="1"/>
</dbReference>
<dbReference type="Pfam" id="PF00270">
    <property type="entry name" value="DEAD"/>
    <property type="match status" value="1"/>
</dbReference>
<dbReference type="Pfam" id="PF08494">
    <property type="entry name" value="DEAD_assoc"/>
    <property type="match status" value="1"/>
</dbReference>
<dbReference type="Pfam" id="PF00271">
    <property type="entry name" value="Helicase_C"/>
    <property type="match status" value="1"/>
</dbReference>
<dbReference type="Pfam" id="PF19306">
    <property type="entry name" value="WH_Lhr"/>
    <property type="match status" value="1"/>
</dbReference>
<dbReference type="PIRSF" id="PIRSF037307">
    <property type="entry name" value="Lhr-like_helic_prd"/>
    <property type="match status" value="1"/>
</dbReference>
<dbReference type="SMART" id="SM00382">
    <property type="entry name" value="AAA"/>
    <property type="match status" value="1"/>
</dbReference>
<dbReference type="SMART" id="SM00487">
    <property type="entry name" value="DEXDc"/>
    <property type="match status" value="1"/>
</dbReference>
<dbReference type="SMART" id="SM00490">
    <property type="entry name" value="HELICc"/>
    <property type="match status" value="1"/>
</dbReference>
<dbReference type="SUPFAM" id="SSF52540">
    <property type="entry name" value="P-loop containing nucleoside triphosphate hydrolases"/>
    <property type="match status" value="1"/>
</dbReference>
<dbReference type="PROSITE" id="PS51192">
    <property type="entry name" value="HELICASE_ATP_BIND_1"/>
    <property type="match status" value="1"/>
</dbReference>
<dbReference type="PROSITE" id="PS51194">
    <property type="entry name" value="HELICASE_CTER"/>
    <property type="match status" value="1"/>
</dbReference>
<comment type="function">
    <text evidence="5 8">DNA helicase that translocates in a 3'-5' direction on single-stranded (ss)DNA, probably involved in DNA repair (PubMed:32706021). Most active on three- or four-stranded forked DNA; flayed structures and Holliday junction (HJ) substrates are unwound slightly less well (PubMed:32706021). Also unwinds 3'-tailed duplexes; both RNA:DNA hybrids and double-stranded (ds)DNA with a 3'-single strand (ss)DNA loading strand are unwound (PubMed:32706021). Substrates where the helicase loads on a 3'-ssRNA tail (DNA:RNA and RNA:RNA) were not tested. Blunt-ended dsDNA is not a substrate (PubMed:32706021). Probably involved in replication-coupled DNA repair; remodeling of fork DNA after binding by Lhr generates ssDNA for ATP-dependent DNA translocation (Probable) (PubMed:32706021).</text>
</comment>
<comment type="catalytic activity">
    <reaction evidence="5">
        <text>Couples ATP hydrolysis with the unwinding of duplex DNA by translocating in the 3'-5' direction.</text>
        <dbReference type="EC" id="5.6.2.4"/>
    </reaction>
</comment>
<comment type="catalytic activity">
    <reaction evidence="8">
        <text>ATP + H2O = ADP + phosphate + H(+)</text>
        <dbReference type="Rhea" id="RHEA:13065"/>
        <dbReference type="ChEBI" id="CHEBI:15377"/>
        <dbReference type="ChEBI" id="CHEBI:15378"/>
        <dbReference type="ChEBI" id="CHEBI:30616"/>
        <dbReference type="ChEBI" id="CHEBI:43474"/>
        <dbReference type="ChEBI" id="CHEBI:456216"/>
        <dbReference type="EC" id="5.6.2.4"/>
    </reaction>
</comment>
<comment type="subunit">
    <text evidence="2">Monomer.</text>
</comment>
<comment type="domain">
    <text evidence="1">Composed of 2 helicase domains, a winged-helix (WH) domain, and Lhr-specific domain 4.</text>
</comment>
<comment type="similarity">
    <text evidence="7">Belongs to the Lhr helicase family. Lhr-Core subfamily.</text>
</comment>
<protein>
    <recommendedName>
        <fullName evidence="6">ATP-dependent helicase Lhr-Core</fullName>
        <ecNumber evidence="5">5.6.2.-</ecNumber>
        <ecNumber evidence="5">5.6.2.4</ecNumber>
    </recommendedName>
    <alternativeName>
        <fullName evidence="7">DNA and RNA:DNA 3'-5' helicase Lhr-Core</fullName>
    </alternativeName>
</protein>
<reference key="1">
    <citation type="journal article" date="1997" name="J. Bacteriol.">
        <title>Complete genome sequence of Methanobacterium thermoautotrophicum deltaH: functional analysis and comparative genomics.</title>
        <authorList>
            <person name="Smith D.R."/>
            <person name="Doucette-Stamm L.A."/>
            <person name="Deloughery C."/>
            <person name="Lee H.-M."/>
            <person name="Dubois J."/>
            <person name="Aldredge T."/>
            <person name="Bashirzadeh R."/>
            <person name="Blakely D."/>
            <person name="Cook R."/>
            <person name="Gilbert K."/>
            <person name="Harrison D."/>
            <person name="Hoang L."/>
            <person name="Keagle P."/>
            <person name="Lumm W."/>
            <person name="Pothier B."/>
            <person name="Qiu D."/>
            <person name="Spadafora R."/>
            <person name="Vicare R."/>
            <person name="Wang Y."/>
            <person name="Wierzbowski J."/>
            <person name="Gibson R."/>
            <person name="Jiwani N."/>
            <person name="Caruso A."/>
            <person name="Bush D."/>
            <person name="Safer H."/>
            <person name="Patwell D."/>
            <person name="Prabhakar S."/>
            <person name="McDougall S."/>
            <person name="Shimer G."/>
            <person name="Goyal A."/>
            <person name="Pietrovski S."/>
            <person name="Church G.M."/>
            <person name="Daniels C.J."/>
            <person name="Mao J.-I."/>
            <person name="Rice P."/>
            <person name="Noelling J."/>
            <person name="Reeve J.N."/>
        </authorList>
    </citation>
    <scope>NUCLEOTIDE SEQUENCE [LARGE SCALE GENOMIC DNA]</scope>
    <source>
        <strain>ATCC 29096 / DSM 1053 / JCM 10044 / NBRC 100330 / Delta H</strain>
    </source>
</reference>
<reference key="2">
    <citation type="journal article" date="2020" name="Biochem. J.">
        <title>Mechanistic insights into Lhr helicase function in DNA repair.</title>
        <authorList>
            <person name="Buckley R.J."/>
            <person name="Kramm K."/>
            <person name="Cooper C.D.O."/>
            <person name="Grohmann D."/>
            <person name="Bolt E.L."/>
        </authorList>
    </citation>
    <scope>FUNCTION AS A HELICASE</scope>
    <scope>CATALYTIC ACTIVITY</scope>
    <scope>DNA-BINDING</scope>
    <source>
        <strain>ATCC 29096 / DSM 1053 / JCM 10044 / NBRC 100330 / Delta H</strain>
    </source>
</reference>
<gene>
    <name evidence="6" type="primary">lhr</name>
    <name type="ordered locus">MTH_1802</name>
</gene>